<organism>
    <name type="scientific">Escherichia coli (strain SE11)</name>
    <dbReference type="NCBI Taxonomy" id="409438"/>
    <lineage>
        <taxon>Bacteria</taxon>
        <taxon>Pseudomonadati</taxon>
        <taxon>Pseudomonadota</taxon>
        <taxon>Gammaproteobacteria</taxon>
        <taxon>Enterobacterales</taxon>
        <taxon>Enterobacteriaceae</taxon>
        <taxon>Escherichia</taxon>
    </lineage>
</organism>
<protein>
    <recommendedName>
        <fullName evidence="1">Cation-efflux pump FieF</fullName>
    </recommendedName>
</protein>
<proteinExistence type="inferred from homology"/>
<gene>
    <name evidence="1" type="primary">fieF</name>
    <name type="ordered locus">ECSE_4203</name>
</gene>
<keyword id="KW-0997">Cell inner membrane</keyword>
<keyword id="KW-1003">Cell membrane</keyword>
<keyword id="KW-0406">Ion transport</keyword>
<keyword id="KW-0408">Iron</keyword>
<keyword id="KW-0410">Iron transport</keyword>
<keyword id="KW-0472">Membrane</keyword>
<keyword id="KW-0479">Metal-binding</keyword>
<keyword id="KW-0812">Transmembrane</keyword>
<keyword id="KW-1133">Transmembrane helix</keyword>
<keyword id="KW-0813">Transport</keyword>
<keyword id="KW-0862">Zinc</keyword>
<keyword id="KW-0864">Zinc transport</keyword>
<accession>B6I4Q7</accession>
<evidence type="ECO:0000255" key="1">
    <source>
        <dbReference type="HAMAP-Rule" id="MF_01425"/>
    </source>
</evidence>
<reference key="1">
    <citation type="journal article" date="2008" name="DNA Res.">
        <title>Complete genome sequence and comparative analysis of the wild-type commensal Escherichia coli strain SE11 isolated from a healthy adult.</title>
        <authorList>
            <person name="Oshima K."/>
            <person name="Toh H."/>
            <person name="Ogura Y."/>
            <person name="Sasamoto H."/>
            <person name="Morita H."/>
            <person name="Park S.-H."/>
            <person name="Ooka T."/>
            <person name="Iyoda S."/>
            <person name="Taylor T.D."/>
            <person name="Hayashi T."/>
            <person name="Itoh K."/>
            <person name="Hattori M."/>
        </authorList>
    </citation>
    <scope>NUCLEOTIDE SEQUENCE [LARGE SCALE GENOMIC DNA]</scope>
    <source>
        <strain>SE11</strain>
    </source>
</reference>
<dbReference type="EMBL" id="AP009240">
    <property type="protein sequence ID" value="BAG79727.1"/>
    <property type="molecule type" value="Genomic_DNA"/>
</dbReference>
<dbReference type="RefSeq" id="WP_001076742.1">
    <property type="nucleotide sequence ID" value="NC_011415.1"/>
</dbReference>
<dbReference type="SMR" id="B6I4Q7"/>
<dbReference type="GeneID" id="75204588"/>
<dbReference type="KEGG" id="ecy:ECSE_4203"/>
<dbReference type="HOGENOM" id="CLU_013430_3_0_6"/>
<dbReference type="Proteomes" id="UP000008199">
    <property type="component" value="Chromosome"/>
</dbReference>
<dbReference type="GO" id="GO:0005886">
    <property type="term" value="C:plasma membrane"/>
    <property type="evidence" value="ECO:0007669"/>
    <property type="project" value="UniProtKB-SubCell"/>
</dbReference>
<dbReference type="GO" id="GO:0015086">
    <property type="term" value="F:cadmium ion transmembrane transporter activity"/>
    <property type="evidence" value="ECO:0007669"/>
    <property type="project" value="UniProtKB-UniRule"/>
</dbReference>
<dbReference type="GO" id="GO:0015093">
    <property type="term" value="F:ferrous iron transmembrane transporter activity"/>
    <property type="evidence" value="ECO:0007669"/>
    <property type="project" value="TreeGrafter"/>
</dbReference>
<dbReference type="GO" id="GO:0046872">
    <property type="term" value="F:metal ion binding"/>
    <property type="evidence" value="ECO:0007669"/>
    <property type="project" value="UniProtKB-KW"/>
</dbReference>
<dbReference type="GO" id="GO:0015341">
    <property type="term" value="F:zinc efflux antiporter activity"/>
    <property type="evidence" value="ECO:0007669"/>
    <property type="project" value="TreeGrafter"/>
</dbReference>
<dbReference type="GO" id="GO:0006882">
    <property type="term" value="P:intracellular zinc ion homeostasis"/>
    <property type="evidence" value="ECO:0007669"/>
    <property type="project" value="TreeGrafter"/>
</dbReference>
<dbReference type="FunFam" id="1.20.1510.10:FF:000001">
    <property type="entry name" value="Ferrous-iron efflux pump FieF"/>
    <property type="match status" value="1"/>
</dbReference>
<dbReference type="FunFam" id="3.30.70.1350:FF:000002">
    <property type="entry name" value="Ferrous-iron efflux pump FieF"/>
    <property type="match status" value="1"/>
</dbReference>
<dbReference type="Gene3D" id="1.20.1510.10">
    <property type="entry name" value="Cation efflux protein transmembrane domain"/>
    <property type="match status" value="1"/>
</dbReference>
<dbReference type="Gene3D" id="3.30.70.1350">
    <property type="entry name" value="Cation efflux protein, cytoplasmic domain"/>
    <property type="match status" value="1"/>
</dbReference>
<dbReference type="HAMAP" id="MF_01425">
    <property type="entry name" value="Cation_efflux_FieF"/>
    <property type="match status" value="1"/>
</dbReference>
<dbReference type="InterPro" id="IPR002524">
    <property type="entry name" value="Cation_efflux"/>
</dbReference>
<dbReference type="InterPro" id="IPR027470">
    <property type="entry name" value="Cation_efflux_CTD"/>
</dbReference>
<dbReference type="InterPro" id="IPR036837">
    <property type="entry name" value="Cation_efflux_CTD_sf"/>
</dbReference>
<dbReference type="InterPro" id="IPR023783">
    <property type="entry name" value="Cation_efflux_FieF"/>
</dbReference>
<dbReference type="InterPro" id="IPR027469">
    <property type="entry name" value="Cation_efflux_TMD_sf"/>
</dbReference>
<dbReference type="InterPro" id="IPR050291">
    <property type="entry name" value="CDF_Transporter"/>
</dbReference>
<dbReference type="NCBIfam" id="TIGR01297">
    <property type="entry name" value="CDF"/>
    <property type="match status" value="1"/>
</dbReference>
<dbReference type="NCBIfam" id="NF007064">
    <property type="entry name" value="PRK09509.1"/>
    <property type="match status" value="1"/>
</dbReference>
<dbReference type="PANTHER" id="PTHR43840:SF41">
    <property type="entry name" value="CATION-EFFLUX PUMP FIEF"/>
    <property type="match status" value="1"/>
</dbReference>
<dbReference type="PANTHER" id="PTHR43840">
    <property type="entry name" value="MITOCHONDRIAL METAL TRANSPORTER 1-RELATED"/>
    <property type="match status" value="1"/>
</dbReference>
<dbReference type="Pfam" id="PF01545">
    <property type="entry name" value="Cation_efflux"/>
    <property type="match status" value="1"/>
</dbReference>
<dbReference type="Pfam" id="PF16916">
    <property type="entry name" value="ZT_dimer"/>
    <property type="match status" value="1"/>
</dbReference>
<dbReference type="SUPFAM" id="SSF160240">
    <property type="entry name" value="Cation efflux protein cytoplasmic domain-like"/>
    <property type="match status" value="1"/>
</dbReference>
<dbReference type="SUPFAM" id="SSF161111">
    <property type="entry name" value="Cation efflux protein transmembrane domain-like"/>
    <property type="match status" value="1"/>
</dbReference>
<sequence>MNQSYGRLVSRAAIAATAMASLLLLIKIFAWWYTGSVSILAALVDSLVDIGASLTNLLVVRYSLQPADDNHSFGHGKAESLAALAQSMFISGSALFLFLTGIQHLISPTPMTDPGVGVIVTIVALICTIILVSFQRWVVRRTQSQAVRADMLHYQSDVMMNGAILLALGLSWYGWHRADALFALGIGIYILYSALRMGYEAVQSLLDRALPDEERQEIIDIVTSWPGVSGAHDLRTRQSGPTRFIQIHLEMEDSLPLVQAHMVADQVEQAILRRFPGSDVIIHQDPCSVVPREGKRSMLS</sequence>
<name>FIEF_ECOSE</name>
<feature type="chain" id="PRO_1000145695" description="Cation-efflux pump FieF">
    <location>
        <begin position="1"/>
        <end position="300"/>
    </location>
</feature>
<feature type="transmembrane region" description="Helical" evidence="1">
    <location>
        <begin position="12"/>
        <end position="32"/>
    </location>
</feature>
<feature type="transmembrane region" description="Helical" evidence="1">
    <location>
        <begin position="39"/>
        <end position="59"/>
    </location>
</feature>
<feature type="transmembrane region" description="Helical" evidence="1">
    <location>
        <begin position="82"/>
        <end position="102"/>
    </location>
</feature>
<feature type="transmembrane region" description="Helical" evidence="1">
    <location>
        <begin position="114"/>
        <end position="134"/>
    </location>
</feature>
<feature type="transmembrane region" description="Helical" evidence="1">
    <location>
        <begin position="156"/>
        <end position="176"/>
    </location>
</feature>
<feature type="transmembrane region" description="Helical" evidence="1">
    <location>
        <begin position="178"/>
        <end position="198"/>
    </location>
</feature>
<feature type="binding site" evidence="1">
    <location>
        <position position="45"/>
    </location>
    <ligand>
        <name>Zn(2+)</name>
        <dbReference type="ChEBI" id="CHEBI:29105"/>
    </ligand>
</feature>
<feature type="binding site" evidence="1">
    <location>
        <position position="49"/>
    </location>
    <ligand>
        <name>Zn(2+)</name>
        <dbReference type="ChEBI" id="CHEBI:29105"/>
    </ligand>
</feature>
<feature type="binding site" evidence="1">
    <location>
        <position position="153"/>
    </location>
    <ligand>
        <name>Zn(2+)</name>
        <dbReference type="ChEBI" id="CHEBI:29105"/>
    </ligand>
</feature>
<feature type="binding site" evidence="1">
    <location>
        <position position="157"/>
    </location>
    <ligand>
        <name>Zn(2+)</name>
        <dbReference type="ChEBI" id="CHEBI:29105"/>
    </ligand>
</feature>
<comment type="function">
    <text evidence="1">Divalent metal cation transporter which exports Zn(2+), Cd(2+) and possibly Fe(2+). May be involved in zinc and iron detoxification by efflux.</text>
</comment>
<comment type="catalytic activity">
    <reaction evidence="1">
        <text>Zn(2+)(in) + H(+)(out) = Zn(2+)(out) + H(+)(in)</text>
        <dbReference type="Rhea" id="RHEA:28839"/>
        <dbReference type="ChEBI" id="CHEBI:15378"/>
        <dbReference type="ChEBI" id="CHEBI:29105"/>
    </reaction>
</comment>
<comment type="catalytic activity">
    <reaction evidence="1">
        <text>Cd(2+)(in) + H(+)(out) = Cd(2+)(out) + H(+)(in)</text>
        <dbReference type="Rhea" id="RHEA:28739"/>
        <dbReference type="ChEBI" id="CHEBI:15378"/>
        <dbReference type="ChEBI" id="CHEBI:48775"/>
    </reaction>
</comment>
<comment type="catalytic activity">
    <reaction evidence="1">
        <text>Fe(2+)(in) + H(+)(out) = Fe(2+)(out) + H(+)(in)</text>
        <dbReference type="Rhea" id="RHEA:29439"/>
        <dbReference type="ChEBI" id="CHEBI:15378"/>
        <dbReference type="ChEBI" id="CHEBI:29033"/>
    </reaction>
</comment>
<comment type="subunit">
    <text evidence="1">Homodimer.</text>
</comment>
<comment type="subcellular location">
    <subcellularLocation>
        <location evidence="1">Cell inner membrane</location>
        <topology evidence="1">Multi-pass membrane protein</topology>
    </subcellularLocation>
</comment>
<comment type="similarity">
    <text evidence="1">Belongs to the cation diffusion facilitator (CDF) transporter (TC 2.A.4) family. FieF subfamily.</text>
</comment>